<reference key="1">
    <citation type="journal article" date="2001" name="Science">
        <title>Comparative genomics of Listeria species.</title>
        <authorList>
            <person name="Glaser P."/>
            <person name="Frangeul L."/>
            <person name="Buchrieser C."/>
            <person name="Rusniok C."/>
            <person name="Amend A."/>
            <person name="Baquero F."/>
            <person name="Berche P."/>
            <person name="Bloecker H."/>
            <person name="Brandt P."/>
            <person name="Chakraborty T."/>
            <person name="Charbit A."/>
            <person name="Chetouani F."/>
            <person name="Couve E."/>
            <person name="de Daruvar A."/>
            <person name="Dehoux P."/>
            <person name="Domann E."/>
            <person name="Dominguez-Bernal G."/>
            <person name="Duchaud E."/>
            <person name="Durant L."/>
            <person name="Dussurget O."/>
            <person name="Entian K.-D."/>
            <person name="Fsihi H."/>
            <person name="Garcia-del Portillo F."/>
            <person name="Garrido P."/>
            <person name="Gautier L."/>
            <person name="Goebel W."/>
            <person name="Gomez-Lopez N."/>
            <person name="Hain T."/>
            <person name="Hauf J."/>
            <person name="Jackson D."/>
            <person name="Jones L.-M."/>
            <person name="Kaerst U."/>
            <person name="Kreft J."/>
            <person name="Kuhn M."/>
            <person name="Kunst F."/>
            <person name="Kurapkat G."/>
            <person name="Madueno E."/>
            <person name="Maitournam A."/>
            <person name="Mata Vicente J."/>
            <person name="Ng E."/>
            <person name="Nedjari H."/>
            <person name="Nordsiek G."/>
            <person name="Novella S."/>
            <person name="de Pablos B."/>
            <person name="Perez-Diaz J.-C."/>
            <person name="Purcell R."/>
            <person name="Remmel B."/>
            <person name="Rose M."/>
            <person name="Schlueter T."/>
            <person name="Simoes N."/>
            <person name="Tierrez A."/>
            <person name="Vazquez-Boland J.-A."/>
            <person name="Voss H."/>
            <person name="Wehland J."/>
            <person name="Cossart P."/>
        </authorList>
    </citation>
    <scope>NUCLEOTIDE SEQUENCE [LARGE SCALE GENOMIC DNA]</scope>
    <source>
        <strain>ATCC BAA-679 / EGD-e</strain>
    </source>
</reference>
<organism>
    <name type="scientific">Listeria monocytogenes serovar 1/2a (strain ATCC BAA-679 / EGD-e)</name>
    <dbReference type="NCBI Taxonomy" id="169963"/>
    <lineage>
        <taxon>Bacteria</taxon>
        <taxon>Bacillati</taxon>
        <taxon>Bacillota</taxon>
        <taxon>Bacilli</taxon>
        <taxon>Bacillales</taxon>
        <taxon>Listeriaceae</taxon>
        <taxon>Listeria</taxon>
    </lineage>
</organism>
<gene>
    <name type="primary">norM</name>
    <name type="ordered locus">lmo1846</name>
</gene>
<dbReference type="EMBL" id="AL591981">
    <property type="protein sequence ID" value="CAC99924.1"/>
    <property type="molecule type" value="Genomic_DNA"/>
</dbReference>
<dbReference type="PIR" id="AF1305">
    <property type="entry name" value="AF1305"/>
</dbReference>
<dbReference type="RefSeq" id="NP_465371.1">
    <property type="nucleotide sequence ID" value="NC_003210.1"/>
</dbReference>
<dbReference type="RefSeq" id="WP_003724070.1">
    <property type="nucleotide sequence ID" value="NZ_CP149495.1"/>
</dbReference>
<dbReference type="SMR" id="Q8Y654"/>
<dbReference type="STRING" id="169963.gene:17594531"/>
<dbReference type="PaxDb" id="169963-lmo1846"/>
<dbReference type="EnsemblBacteria" id="CAC99924">
    <property type="protein sequence ID" value="CAC99924"/>
    <property type="gene ID" value="CAC99924"/>
</dbReference>
<dbReference type="GeneID" id="985857"/>
<dbReference type="KEGG" id="lmo:lmo1846"/>
<dbReference type="PATRIC" id="fig|169963.11.peg.1891"/>
<dbReference type="eggNOG" id="COG0534">
    <property type="taxonomic scope" value="Bacteria"/>
</dbReference>
<dbReference type="HOGENOM" id="CLU_012893_6_0_9"/>
<dbReference type="OrthoDB" id="9780160at2"/>
<dbReference type="PhylomeDB" id="Q8Y654"/>
<dbReference type="BioCyc" id="LMON169963:LMO1846-MONOMER"/>
<dbReference type="Proteomes" id="UP000000817">
    <property type="component" value="Chromosome"/>
</dbReference>
<dbReference type="GO" id="GO:0005886">
    <property type="term" value="C:plasma membrane"/>
    <property type="evidence" value="ECO:0000318"/>
    <property type="project" value="GO_Central"/>
</dbReference>
<dbReference type="GO" id="GO:0015297">
    <property type="term" value="F:antiporter activity"/>
    <property type="evidence" value="ECO:0007669"/>
    <property type="project" value="UniProtKB-KW"/>
</dbReference>
<dbReference type="GO" id="GO:0042910">
    <property type="term" value="F:xenobiotic transmembrane transporter activity"/>
    <property type="evidence" value="ECO:0007669"/>
    <property type="project" value="InterPro"/>
</dbReference>
<dbReference type="GO" id="GO:0006811">
    <property type="term" value="P:monoatomic ion transport"/>
    <property type="evidence" value="ECO:0007669"/>
    <property type="project" value="UniProtKB-KW"/>
</dbReference>
<dbReference type="CDD" id="cd13131">
    <property type="entry name" value="MATE_NorM_like"/>
    <property type="match status" value="1"/>
</dbReference>
<dbReference type="InterPro" id="IPR002528">
    <property type="entry name" value="MATE_fam"/>
</dbReference>
<dbReference type="InterPro" id="IPR050222">
    <property type="entry name" value="MATE_MdtK"/>
</dbReference>
<dbReference type="InterPro" id="IPR048279">
    <property type="entry name" value="MdtK-like"/>
</dbReference>
<dbReference type="NCBIfam" id="TIGR00797">
    <property type="entry name" value="matE"/>
    <property type="match status" value="1"/>
</dbReference>
<dbReference type="PANTHER" id="PTHR43298:SF2">
    <property type="entry name" value="FMN_FAD EXPORTER YEEO-RELATED"/>
    <property type="match status" value="1"/>
</dbReference>
<dbReference type="PANTHER" id="PTHR43298">
    <property type="entry name" value="MULTIDRUG RESISTANCE PROTEIN NORM-RELATED"/>
    <property type="match status" value="1"/>
</dbReference>
<dbReference type="Pfam" id="PF01554">
    <property type="entry name" value="MatE"/>
    <property type="match status" value="2"/>
</dbReference>
<dbReference type="PIRSF" id="PIRSF006603">
    <property type="entry name" value="DinF"/>
    <property type="match status" value="1"/>
</dbReference>
<comment type="function">
    <text evidence="1">Multidrug efflux pump.</text>
</comment>
<comment type="subcellular location">
    <subcellularLocation>
        <location evidence="1">Cell membrane</location>
        <topology evidence="1">Multi-pass membrane protein</topology>
    </subcellularLocation>
</comment>
<comment type="similarity">
    <text evidence="3">Belongs to the multi antimicrobial extrusion (MATE) (TC 2.A.66.1) family.</text>
</comment>
<feature type="chain" id="PRO_0000164223" description="Probable multidrug resistance protein NorM">
    <location>
        <begin position="1"/>
        <end position="456"/>
    </location>
</feature>
<feature type="transmembrane region" description="Helical" evidence="2">
    <location>
        <begin position="13"/>
        <end position="34"/>
    </location>
</feature>
<feature type="transmembrane region" description="Helical" evidence="2">
    <location>
        <begin position="54"/>
        <end position="76"/>
    </location>
</feature>
<feature type="transmembrane region" description="Helical" evidence="2">
    <location>
        <begin position="95"/>
        <end position="117"/>
    </location>
</feature>
<feature type="transmembrane region" description="Helical" evidence="2">
    <location>
        <begin position="132"/>
        <end position="154"/>
    </location>
</feature>
<feature type="transmembrane region" description="Helical" evidence="2">
    <location>
        <begin position="161"/>
        <end position="183"/>
    </location>
</feature>
<feature type="transmembrane region" description="Helical" evidence="2">
    <location>
        <begin position="193"/>
        <end position="215"/>
    </location>
</feature>
<feature type="transmembrane region" description="Helical" evidence="2">
    <location>
        <begin position="244"/>
        <end position="266"/>
    </location>
</feature>
<feature type="transmembrane region" description="Helical" evidence="2">
    <location>
        <begin position="286"/>
        <end position="308"/>
    </location>
</feature>
<feature type="transmembrane region" description="Helical" evidence="2">
    <location>
        <begin position="321"/>
        <end position="343"/>
    </location>
</feature>
<feature type="transmembrane region" description="Helical" evidence="2">
    <location>
        <begin position="358"/>
        <end position="380"/>
    </location>
</feature>
<feature type="transmembrane region" description="Helical" evidence="2">
    <location>
        <begin position="387"/>
        <end position="409"/>
    </location>
</feature>
<feature type="transmembrane region" description="Helical" evidence="2">
    <location>
        <begin position="414"/>
        <end position="436"/>
    </location>
</feature>
<proteinExistence type="inferred from homology"/>
<accession>Q8Y654</accession>
<name>NORM_LISMO</name>
<evidence type="ECO:0000250" key="1"/>
<evidence type="ECO:0000255" key="2"/>
<evidence type="ECO:0000305" key="3"/>
<keyword id="KW-0050">Antiport</keyword>
<keyword id="KW-1003">Cell membrane</keyword>
<keyword id="KW-0406">Ion transport</keyword>
<keyword id="KW-0472">Membrane</keyword>
<keyword id="KW-1185">Reference proteome</keyword>
<keyword id="KW-0812">Transmembrane</keyword>
<keyword id="KW-1133">Transmembrane helix</keyword>
<keyword id="KW-0813">Transport</keyword>
<sequence length="456" mass="49656">MQQTVTYGAKWKQFLTIFTPIVITQLTLFSMTFFDTTMSGNYSNQALAGVAIGSSFWAPVNAAFSGLLMAITPIIAQLIGAKKEKQVKNTVHNGLYIALFLAFILILINFLVVPMILTHMPVTAEVADIARHFLNGICIGIPAFFISAILRSFIDSLGLTRVTMLITLCTVPFNIFLNYCFIFGNFGFPEMGGAGSGYATGITYWLVVLVSVILIQTQTRLRKFGVFKGLTALRFSKIKEIIGIGVPNGLTILFETSIFSAVTILMGAFGTETIAAHQSANSVCTLLYAFPLSVASTLTILGGYETGAKRLKDAKQYRHIGMAAAILIGCVNGAILFFFRDIIAGFYTNDPALSNLIMHFLVYAILFQFADAVLSPVLGALRGYKDVTVTSIVAFISYWLIGLPVGYGLSFTNLGPFGYWIGLSTGLFVAAFILSIRVRKTEQKLSFNTKDAEISN</sequence>
<protein>
    <recommendedName>
        <fullName>Probable multidrug resistance protein NorM</fullName>
    </recommendedName>
    <alternativeName>
        <fullName>Multidrug-efflux transporter</fullName>
    </alternativeName>
</protein>